<keyword id="KW-0997">Cell inner membrane</keyword>
<keyword id="KW-1003">Cell membrane</keyword>
<keyword id="KW-0143">Chaperone</keyword>
<keyword id="KW-0472">Membrane</keyword>
<keyword id="KW-0653">Protein transport</keyword>
<keyword id="KW-0812">Transmembrane</keyword>
<keyword id="KW-1133">Transmembrane helix</keyword>
<keyword id="KW-0813">Transport</keyword>
<sequence length="558" mass="61191">MDIKRTVLWVIFFMSAVMLFDNWQRSHGRPSMFFPNVTQTNTASNATNGNGASGASAAAAANALPAAATGAAPATTAPAAQAQLVRFSTDVYNGEIDTRGGTLAKLTLTKAGDGKQPDLSVTLFDHTANHTYLARTGLLGGDFPNHNDVYAQVAGPTSLAADQNTLKLSFESPVKGGVKVVKTYTFTRGSYVIGVDTKIENVGAAPVTPSVYMELVRDNSSVETPMFSHTFLGPAVYTDQKHFQKITFGDIDKNKADYVTSADNGWIAMVQHYFASAWIPQSGAKRDIYVEKIDPTLYRVGVKQPVEAIAPGQSADVSARLFAGPEEERMLEGIAPGLELVKDYGWVTIIAKPLFWLLEKIHGFVGNWGWAIVLLTLLIKAVFFPLSAASYKSMARMKEITPRMQALRERFKSDPQKMNAALMELYKTEKVNPFGGCLPVVIQIPVFISLYWVLLASVEMRGAPWVLWIHDLSQRDPYFILPVLMAVSMFVQTKLNPTPPDPVQAKMMMFMPIAFSVMFFFFPAGLVLYYVVNNVLSIAQQYYITRTLGGAAAKKKAS</sequence>
<proteinExistence type="inferred from homology"/>
<name>YIDC_BURM9</name>
<evidence type="ECO:0000255" key="1">
    <source>
        <dbReference type="HAMAP-Rule" id="MF_01810"/>
    </source>
</evidence>
<accession>A2S8D6</accession>
<feature type="chain" id="PRO_1000070068" description="Membrane protein insertase YidC">
    <location>
        <begin position="1"/>
        <end position="558"/>
    </location>
</feature>
<feature type="transmembrane region" description="Helical" evidence="1">
    <location>
        <begin position="3"/>
        <end position="23"/>
    </location>
</feature>
<feature type="transmembrane region" description="Helical" evidence="1">
    <location>
        <begin position="364"/>
        <end position="384"/>
    </location>
</feature>
<feature type="transmembrane region" description="Helical" evidence="1">
    <location>
        <begin position="438"/>
        <end position="458"/>
    </location>
</feature>
<feature type="transmembrane region" description="Helical" evidence="1">
    <location>
        <begin position="477"/>
        <end position="497"/>
    </location>
</feature>
<feature type="transmembrane region" description="Helical" evidence="1">
    <location>
        <begin position="508"/>
        <end position="528"/>
    </location>
</feature>
<organism>
    <name type="scientific">Burkholderia mallei (strain NCTC 10229)</name>
    <dbReference type="NCBI Taxonomy" id="412022"/>
    <lineage>
        <taxon>Bacteria</taxon>
        <taxon>Pseudomonadati</taxon>
        <taxon>Pseudomonadota</taxon>
        <taxon>Betaproteobacteria</taxon>
        <taxon>Burkholderiales</taxon>
        <taxon>Burkholderiaceae</taxon>
        <taxon>Burkholderia</taxon>
        <taxon>pseudomallei group</taxon>
    </lineage>
</organism>
<gene>
    <name evidence="1" type="primary">yidC</name>
    <name type="ordered locus">BMA10229_A2241</name>
</gene>
<reference key="1">
    <citation type="journal article" date="2010" name="Genome Biol. Evol.">
        <title>Continuing evolution of Burkholderia mallei through genome reduction and large-scale rearrangements.</title>
        <authorList>
            <person name="Losada L."/>
            <person name="Ronning C.M."/>
            <person name="DeShazer D."/>
            <person name="Woods D."/>
            <person name="Fedorova N."/>
            <person name="Kim H.S."/>
            <person name="Shabalina S.A."/>
            <person name="Pearson T.R."/>
            <person name="Brinkac L."/>
            <person name="Tan P."/>
            <person name="Nandi T."/>
            <person name="Crabtree J."/>
            <person name="Badger J."/>
            <person name="Beckstrom-Sternberg S."/>
            <person name="Saqib M."/>
            <person name="Schutzer S.E."/>
            <person name="Keim P."/>
            <person name="Nierman W.C."/>
        </authorList>
    </citation>
    <scope>NUCLEOTIDE SEQUENCE [LARGE SCALE GENOMIC DNA]</scope>
    <source>
        <strain>NCTC 10229</strain>
    </source>
</reference>
<dbReference type="EMBL" id="CP000546">
    <property type="protein sequence ID" value="ABN03572.1"/>
    <property type="molecule type" value="Genomic_DNA"/>
</dbReference>
<dbReference type="RefSeq" id="WP_004198813.1">
    <property type="nucleotide sequence ID" value="NC_008836.1"/>
</dbReference>
<dbReference type="SMR" id="A2S8D6"/>
<dbReference type="GeneID" id="92981062"/>
<dbReference type="KEGG" id="bml:BMA10229_A2241"/>
<dbReference type="HOGENOM" id="CLU_016535_3_0_4"/>
<dbReference type="Proteomes" id="UP000002283">
    <property type="component" value="Chromosome I"/>
</dbReference>
<dbReference type="GO" id="GO:0005886">
    <property type="term" value="C:plasma membrane"/>
    <property type="evidence" value="ECO:0007669"/>
    <property type="project" value="UniProtKB-SubCell"/>
</dbReference>
<dbReference type="GO" id="GO:0032977">
    <property type="term" value="F:membrane insertase activity"/>
    <property type="evidence" value="ECO:0007669"/>
    <property type="project" value="InterPro"/>
</dbReference>
<dbReference type="GO" id="GO:0051205">
    <property type="term" value="P:protein insertion into membrane"/>
    <property type="evidence" value="ECO:0007669"/>
    <property type="project" value="TreeGrafter"/>
</dbReference>
<dbReference type="GO" id="GO:0015031">
    <property type="term" value="P:protein transport"/>
    <property type="evidence" value="ECO:0007669"/>
    <property type="project" value="UniProtKB-KW"/>
</dbReference>
<dbReference type="CDD" id="cd20070">
    <property type="entry name" value="5TM_YidC_Alb3"/>
    <property type="match status" value="1"/>
</dbReference>
<dbReference type="CDD" id="cd19961">
    <property type="entry name" value="EcYidC-like_peri"/>
    <property type="match status" value="1"/>
</dbReference>
<dbReference type="Gene3D" id="2.70.98.90">
    <property type="match status" value="1"/>
</dbReference>
<dbReference type="HAMAP" id="MF_01810">
    <property type="entry name" value="YidC_type1"/>
    <property type="match status" value="1"/>
</dbReference>
<dbReference type="InterPro" id="IPR019998">
    <property type="entry name" value="Membr_insert_YidC"/>
</dbReference>
<dbReference type="InterPro" id="IPR028053">
    <property type="entry name" value="Membr_insert_YidC_N"/>
</dbReference>
<dbReference type="InterPro" id="IPR001708">
    <property type="entry name" value="YidC/ALB3/OXA1/COX18"/>
</dbReference>
<dbReference type="InterPro" id="IPR028055">
    <property type="entry name" value="YidC/Oxa/ALB_C"/>
</dbReference>
<dbReference type="InterPro" id="IPR047196">
    <property type="entry name" value="YidC_ALB_C"/>
</dbReference>
<dbReference type="InterPro" id="IPR038221">
    <property type="entry name" value="YidC_periplasmic_sf"/>
</dbReference>
<dbReference type="NCBIfam" id="NF002352">
    <property type="entry name" value="PRK01318.1-3"/>
    <property type="match status" value="1"/>
</dbReference>
<dbReference type="NCBIfam" id="NF002353">
    <property type="entry name" value="PRK01318.1-4"/>
    <property type="match status" value="1"/>
</dbReference>
<dbReference type="NCBIfam" id="TIGR03593">
    <property type="entry name" value="yidC_nterm"/>
    <property type="match status" value="1"/>
</dbReference>
<dbReference type="NCBIfam" id="TIGR03592">
    <property type="entry name" value="yidC_oxa1_cterm"/>
    <property type="match status" value="1"/>
</dbReference>
<dbReference type="PANTHER" id="PTHR12428:SF65">
    <property type="entry name" value="CYTOCHROME C OXIDASE ASSEMBLY PROTEIN COX18, MITOCHONDRIAL"/>
    <property type="match status" value="1"/>
</dbReference>
<dbReference type="PANTHER" id="PTHR12428">
    <property type="entry name" value="OXA1"/>
    <property type="match status" value="1"/>
</dbReference>
<dbReference type="Pfam" id="PF02096">
    <property type="entry name" value="60KD_IMP"/>
    <property type="match status" value="1"/>
</dbReference>
<dbReference type="Pfam" id="PF14849">
    <property type="entry name" value="YidC_periplas"/>
    <property type="match status" value="1"/>
</dbReference>
<dbReference type="PRINTS" id="PR00701">
    <property type="entry name" value="60KDINNERMP"/>
</dbReference>
<dbReference type="PRINTS" id="PR01900">
    <property type="entry name" value="YIDCPROTEIN"/>
</dbReference>
<comment type="function">
    <text evidence="1">Required for the insertion and/or proper folding and/or complex formation of integral membrane proteins into the membrane. Involved in integration of membrane proteins that insert both dependently and independently of the Sec translocase complex, as well as at least some lipoproteins. Aids folding of multispanning membrane proteins.</text>
</comment>
<comment type="subunit">
    <text evidence="1">Interacts with the Sec translocase complex via SecD. Specifically interacts with transmembrane segments of nascent integral membrane proteins during membrane integration.</text>
</comment>
<comment type="subcellular location">
    <subcellularLocation>
        <location evidence="1">Cell inner membrane</location>
        <topology evidence="1">Multi-pass membrane protein</topology>
    </subcellularLocation>
</comment>
<comment type="similarity">
    <text evidence="1">Belongs to the OXA1/ALB3/YidC family. Type 1 subfamily.</text>
</comment>
<protein>
    <recommendedName>
        <fullName evidence="1">Membrane protein insertase YidC</fullName>
    </recommendedName>
    <alternativeName>
        <fullName evidence="1">Foldase YidC</fullName>
    </alternativeName>
    <alternativeName>
        <fullName evidence="1">Membrane integrase YidC</fullName>
    </alternativeName>
    <alternativeName>
        <fullName evidence="1">Membrane protein YidC</fullName>
    </alternativeName>
</protein>